<comment type="function">
    <text evidence="3">Catalytic component of the histone acetylase B (HAT-B) complex. Acetylates 'Lys-12' of histone H4 which is required for telomeric silencing. Has intrinsic substrate specificity that modifies lysine in recognition sequence GXGKXG. Involved in DNA double-strand break repair.</text>
</comment>
<comment type="catalytic activity">
    <reaction evidence="3">
        <text>L-lysyl-[protein] + acetyl-CoA = N(6)-acetyl-L-lysyl-[protein] + CoA + H(+)</text>
        <dbReference type="Rhea" id="RHEA:45948"/>
        <dbReference type="Rhea" id="RHEA-COMP:9752"/>
        <dbReference type="Rhea" id="RHEA-COMP:10731"/>
        <dbReference type="ChEBI" id="CHEBI:15378"/>
        <dbReference type="ChEBI" id="CHEBI:29969"/>
        <dbReference type="ChEBI" id="CHEBI:57287"/>
        <dbReference type="ChEBI" id="CHEBI:57288"/>
        <dbReference type="ChEBI" id="CHEBI:61930"/>
        <dbReference type="EC" id="2.3.1.48"/>
    </reaction>
</comment>
<comment type="subunit">
    <text evidence="3">Component of the HAT-B complex composed of at least HAT1 and HAT2. The HAT-B complex binds to histone H4 tail.</text>
</comment>
<comment type="subcellular location">
    <subcellularLocation>
        <location evidence="1">Cytoplasm</location>
    </subcellularLocation>
    <subcellularLocation>
        <location evidence="1">Nucleus</location>
    </subcellularLocation>
</comment>
<comment type="similarity">
    <text evidence="4">Belongs to the HAT1 family.</text>
</comment>
<sequence>MSDNSPITSITAASLQPELWTSSSNDALQIYITDSDGTALNFHPNFTYPIFGDSEQIFGYRDLVIFLCFDHCTFYPFLNVKYSDKLNDDTLEDPREKLLSYLPESTIFKDEVKWVDSINKEKEGFEIPGELVGNIFTHGDDKFGIYKLDLKNAQGLELHKRLQILVLLFIEAGSYIDHQDELWDIYVMYKVTDEKTPSIIGFCTAYNYWKYGGFEKFDSNQQEVRKKISQFIVLPMYQGLKLGGRFYNKLYEYWMQDPRVIEVVVEDPSESFDDLRDRCDLTRLCQNTIKVASVDLPLINTEWATKLRQEQKLEKRQFSRLLEMILIYQLEHNLTNITKKQVRLFIKKRLYEKNKEILDGLDEPTRLDKLQTAYASLESDYKRILSGLSLHKRALDSTEGSSKKSKPNV</sequence>
<gene>
    <name type="primary">HAT1</name>
    <name type="ordered locus">DEHA2D07062g</name>
</gene>
<feature type="chain" id="PRO_0000227723" description="Histone acetyltransferase type B catalytic subunit">
    <location>
        <begin position="1"/>
        <end position="409"/>
    </location>
</feature>
<feature type="region of interest" description="Interaction with histone H4 N-terminus" evidence="3">
    <location>
        <begin position="53"/>
        <end position="55"/>
    </location>
</feature>
<feature type="region of interest" description="Interaction with histone H4 N-terminus" evidence="3">
    <location>
        <begin position="206"/>
        <end position="208"/>
    </location>
</feature>
<feature type="active site" description="Proton donor/acceptor" evidence="3">
    <location>
        <position position="266"/>
    </location>
</feature>
<feature type="binding site" evidence="3">
    <location>
        <begin position="231"/>
        <end position="233"/>
    </location>
    <ligand>
        <name>acetyl-CoA</name>
        <dbReference type="ChEBI" id="CHEBI:57288"/>
    </ligand>
</feature>
<feature type="binding site" evidence="3">
    <location>
        <begin position="238"/>
        <end position="244"/>
    </location>
    <ligand>
        <name>acetyl-CoA</name>
        <dbReference type="ChEBI" id="CHEBI:57288"/>
    </ligand>
</feature>
<feature type="site" description="Interaction with histone H4 N-terminus" evidence="2">
    <location>
        <position position="183"/>
    </location>
</feature>
<evidence type="ECO:0000250" key="1"/>
<evidence type="ECO:0000250" key="2">
    <source>
        <dbReference type="UniProtKB" id="O14929"/>
    </source>
</evidence>
<evidence type="ECO:0000250" key="3">
    <source>
        <dbReference type="UniProtKB" id="Q12341"/>
    </source>
</evidence>
<evidence type="ECO:0000305" key="4"/>
<reference key="1">
    <citation type="journal article" date="2004" name="Nature">
        <title>Genome evolution in yeasts.</title>
        <authorList>
            <person name="Dujon B."/>
            <person name="Sherman D."/>
            <person name="Fischer G."/>
            <person name="Durrens P."/>
            <person name="Casaregola S."/>
            <person name="Lafontaine I."/>
            <person name="de Montigny J."/>
            <person name="Marck C."/>
            <person name="Neuveglise C."/>
            <person name="Talla E."/>
            <person name="Goffard N."/>
            <person name="Frangeul L."/>
            <person name="Aigle M."/>
            <person name="Anthouard V."/>
            <person name="Babour A."/>
            <person name="Barbe V."/>
            <person name="Barnay S."/>
            <person name="Blanchin S."/>
            <person name="Beckerich J.-M."/>
            <person name="Beyne E."/>
            <person name="Bleykasten C."/>
            <person name="Boisrame A."/>
            <person name="Boyer J."/>
            <person name="Cattolico L."/>
            <person name="Confanioleri F."/>
            <person name="de Daruvar A."/>
            <person name="Despons L."/>
            <person name="Fabre E."/>
            <person name="Fairhead C."/>
            <person name="Ferry-Dumazet H."/>
            <person name="Groppi A."/>
            <person name="Hantraye F."/>
            <person name="Hennequin C."/>
            <person name="Jauniaux N."/>
            <person name="Joyet P."/>
            <person name="Kachouri R."/>
            <person name="Kerrest A."/>
            <person name="Koszul R."/>
            <person name="Lemaire M."/>
            <person name="Lesur I."/>
            <person name="Ma L."/>
            <person name="Muller H."/>
            <person name="Nicaud J.-M."/>
            <person name="Nikolski M."/>
            <person name="Oztas S."/>
            <person name="Ozier-Kalogeropoulos O."/>
            <person name="Pellenz S."/>
            <person name="Potier S."/>
            <person name="Richard G.-F."/>
            <person name="Straub M.-L."/>
            <person name="Suleau A."/>
            <person name="Swennen D."/>
            <person name="Tekaia F."/>
            <person name="Wesolowski-Louvel M."/>
            <person name="Westhof E."/>
            <person name="Wirth B."/>
            <person name="Zeniou-Meyer M."/>
            <person name="Zivanovic Y."/>
            <person name="Bolotin-Fukuhara M."/>
            <person name="Thierry A."/>
            <person name="Bouchier C."/>
            <person name="Caudron B."/>
            <person name="Scarpelli C."/>
            <person name="Gaillardin C."/>
            <person name="Weissenbach J."/>
            <person name="Wincker P."/>
            <person name="Souciet J.-L."/>
        </authorList>
    </citation>
    <scope>NUCLEOTIDE SEQUENCE [LARGE SCALE GENOMIC DNA]</scope>
    <source>
        <strain>ATCC 36239 / CBS 767 / BCRC 21394 / JCM 1990 / NBRC 0083 / IGC 2968</strain>
    </source>
</reference>
<accession>Q6BSQ1</accession>
<organism>
    <name type="scientific">Debaryomyces hansenii (strain ATCC 36239 / CBS 767 / BCRC 21394 / JCM 1990 / NBRC 0083 / IGC 2968)</name>
    <name type="common">Yeast</name>
    <name type="synonym">Torulaspora hansenii</name>
    <dbReference type="NCBI Taxonomy" id="284592"/>
    <lineage>
        <taxon>Eukaryota</taxon>
        <taxon>Fungi</taxon>
        <taxon>Dikarya</taxon>
        <taxon>Ascomycota</taxon>
        <taxon>Saccharomycotina</taxon>
        <taxon>Pichiomycetes</taxon>
        <taxon>Debaryomycetaceae</taxon>
        <taxon>Debaryomyces</taxon>
    </lineage>
</organism>
<dbReference type="EC" id="2.3.1.48" evidence="3"/>
<dbReference type="EMBL" id="CR382136">
    <property type="protein sequence ID" value="CAG86913.2"/>
    <property type="molecule type" value="Genomic_DNA"/>
</dbReference>
<dbReference type="RefSeq" id="XP_458769.2">
    <property type="nucleotide sequence ID" value="XM_458769.1"/>
</dbReference>
<dbReference type="SMR" id="Q6BSQ1"/>
<dbReference type="FunCoup" id="Q6BSQ1">
    <property type="interactions" value="1202"/>
</dbReference>
<dbReference type="STRING" id="284592.Q6BSQ1"/>
<dbReference type="GeneID" id="2901027"/>
<dbReference type="KEGG" id="dha:DEHA2D07062g"/>
<dbReference type="VEuPathDB" id="FungiDB:DEHA2D07062g"/>
<dbReference type="eggNOG" id="KOG2696">
    <property type="taxonomic scope" value="Eukaryota"/>
</dbReference>
<dbReference type="HOGENOM" id="CLU_036024_2_1_1"/>
<dbReference type="InParanoid" id="Q6BSQ1"/>
<dbReference type="OMA" id="WTCDAND"/>
<dbReference type="OrthoDB" id="10253098at2759"/>
<dbReference type="Proteomes" id="UP000000599">
    <property type="component" value="Chromosome D"/>
</dbReference>
<dbReference type="GO" id="GO:0000781">
    <property type="term" value="C:chromosome, telomeric region"/>
    <property type="evidence" value="ECO:0007669"/>
    <property type="project" value="GOC"/>
</dbReference>
<dbReference type="GO" id="GO:0005737">
    <property type="term" value="C:cytoplasm"/>
    <property type="evidence" value="ECO:0007669"/>
    <property type="project" value="UniProtKB-SubCell"/>
</dbReference>
<dbReference type="GO" id="GO:0000123">
    <property type="term" value="C:histone acetyltransferase complex"/>
    <property type="evidence" value="ECO:0007669"/>
    <property type="project" value="EnsemblFungi"/>
</dbReference>
<dbReference type="GO" id="GO:0005634">
    <property type="term" value="C:nucleus"/>
    <property type="evidence" value="ECO:0007669"/>
    <property type="project" value="UniProtKB-SubCell"/>
</dbReference>
<dbReference type="GO" id="GO:0003682">
    <property type="term" value="F:chromatin binding"/>
    <property type="evidence" value="ECO:0007669"/>
    <property type="project" value="EnsemblFungi"/>
</dbReference>
<dbReference type="GO" id="GO:0004402">
    <property type="term" value="F:histone acetyltransferase activity"/>
    <property type="evidence" value="ECO:0007669"/>
    <property type="project" value="UniProtKB-EC"/>
</dbReference>
<dbReference type="GO" id="GO:0042393">
    <property type="term" value="F:histone binding"/>
    <property type="evidence" value="ECO:0007669"/>
    <property type="project" value="InterPro"/>
</dbReference>
<dbReference type="GO" id="GO:0006302">
    <property type="term" value="P:double-strand break repair"/>
    <property type="evidence" value="ECO:0007669"/>
    <property type="project" value="EnsemblFungi"/>
</dbReference>
<dbReference type="GO" id="GO:0031509">
    <property type="term" value="P:subtelomeric heterochromatin formation"/>
    <property type="evidence" value="ECO:0007669"/>
    <property type="project" value="EnsemblFungi"/>
</dbReference>
<dbReference type="Gene3D" id="1.10.10.390">
    <property type="match status" value="1"/>
</dbReference>
<dbReference type="Gene3D" id="3.40.630.30">
    <property type="match status" value="1"/>
</dbReference>
<dbReference type="Gene3D" id="3.90.360.10">
    <property type="entry name" value="Histone acetyl transferase 1 (HAT1), N-terminal domain"/>
    <property type="match status" value="1"/>
</dbReference>
<dbReference type="InterPro" id="IPR016181">
    <property type="entry name" value="Acyl_CoA_acyltransferase"/>
</dbReference>
<dbReference type="InterPro" id="IPR019467">
    <property type="entry name" value="Hat1_N"/>
</dbReference>
<dbReference type="InterPro" id="IPR037113">
    <property type="entry name" value="Hat1_N_sf"/>
</dbReference>
<dbReference type="InterPro" id="IPR017380">
    <property type="entry name" value="Hist_AcTrfase_B-typ_cat-su"/>
</dbReference>
<dbReference type="InterPro" id="IPR013523">
    <property type="entry name" value="Hist_AcTrfase_HAT1_C"/>
</dbReference>
<dbReference type="PANTHER" id="PTHR12046">
    <property type="entry name" value="HISTONE ACETYLTRANSFERASE TYPE B CATALYTIC SUBUNIT"/>
    <property type="match status" value="1"/>
</dbReference>
<dbReference type="Pfam" id="PF21184">
    <property type="entry name" value="HAT1_C_fung"/>
    <property type="match status" value="1"/>
</dbReference>
<dbReference type="Pfam" id="PF10394">
    <property type="entry name" value="Hat1_N"/>
    <property type="match status" value="1"/>
</dbReference>
<dbReference type="PIRSF" id="PIRSF038084">
    <property type="entry name" value="HAT-B_cat"/>
    <property type="match status" value="1"/>
</dbReference>
<dbReference type="SUPFAM" id="SSF55729">
    <property type="entry name" value="Acyl-CoA N-acyltransferases (Nat)"/>
    <property type="match status" value="1"/>
</dbReference>
<keyword id="KW-0012">Acyltransferase</keyword>
<keyword id="KW-0156">Chromatin regulator</keyword>
<keyword id="KW-0963">Cytoplasm</keyword>
<keyword id="KW-0227">DNA damage</keyword>
<keyword id="KW-0234">DNA repair</keyword>
<keyword id="KW-0539">Nucleus</keyword>
<keyword id="KW-1185">Reference proteome</keyword>
<keyword id="KW-0808">Transferase</keyword>
<proteinExistence type="inferred from homology"/>
<protein>
    <recommendedName>
        <fullName>Histone acetyltransferase type B catalytic subunit</fullName>
        <ecNumber evidence="3">2.3.1.48</ecNumber>
    </recommendedName>
</protein>
<name>HAT1_DEBHA</name>